<keyword id="KW-0238">DNA-binding</keyword>
<keyword id="KW-0539">Nucleus</keyword>
<keyword id="KW-1185">Reference proteome</keyword>
<keyword id="KW-0804">Transcription</keyword>
<keyword id="KW-0805">Transcription regulation</keyword>
<organism>
    <name type="scientific">Arabidopsis thaliana</name>
    <name type="common">Mouse-ear cress</name>
    <dbReference type="NCBI Taxonomy" id="3702"/>
    <lineage>
        <taxon>Eukaryota</taxon>
        <taxon>Viridiplantae</taxon>
        <taxon>Streptophyta</taxon>
        <taxon>Embryophyta</taxon>
        <taxon>Tracheophyta</taxon>
        <taxon>Spermatophyta</taxon>
        <taxon>Magnoliopsida</taxon>
        <taxon>eudicotyledons</taxon>
        <taxon>Gunneridae</taxon>
        <taxon>Pentapetalae</taxon>
        <taxon>rosids</taxon>
        <taxon>malvids</taxon>
        <taxon>Brassicales</taxon>
        <taxon>Brassicaceae</taxon>
        <taxon>Camelineae</taxon>
        <taxon>Arabidopsis</taxon>
    </lineage>
</organism>
<name>WRK30_ARATH</name>
<feature type="chain" id="PRO_0000133672" description="Probable WRKY transcription factor 30">
    <location>
        <begin position="1"/>
        <end position="303"/>
    </location>
</feature>
<feature type="DNA-binding region" description="WRKY" evidence="2">
    <location>
        <begin position="107"/>
        <end position="175"/>
    </location>
</feature>
<feature type="region of interest" description="Disordered" evidence="3">
    <location>
        <begin position="65"/>
        <end position="92"/>
    </location>
</feature>
<feature type="region of interest" description="Disordered" evidence="3">
    <location>
        <begin position="266"/>
        <end position="291"/>
    </location>
</feature>
<feature type="compositionally biased region" description="Low complexity" evidence="3">
    <location>
        <begin position="266"/>
        <end position="278"/>
    </location>
</feature>
<proteinExistence type="evidence at protein level"/>
<sequence length="303" mass="33985">MEKNHSSGEWEKMKNEINELMIEGRDYAHQFGSASSQETREHLAKKILQSYHKSLTIMNYSGELDQVSQGGGSPKSDDSDQEPLVIKSSKKSMPRWSSKVRIAPGAGVDRTLDDGFSWRKYGQKDILGAKFPRGYYRCTYRKSQGCEATKQVQRSDENQMLLEISYRGIHSCSQAANVGTTMPIQNLEPNQTQEHGNLDMVKESVDNYNHQAHLHHNLHYPLSSTPNLENNNAYMLQMRDQNIEYFGSTSFSSDLGTSINYNFPASGSASHSASNSPSTVPLESPFESYDPNHPYGGFGGFYS</sequence>
<reference key="1">
    <citation type="submission" date="2001-08" db="EMBL/GenBank/DDBJ databases">
        <authorList>
            <person name="Ulker B."/>
            <person name="Kushnir S."/>
            <person name="Somssich I.E."/>
        </authorList>
    </citation>
    <scope>NUCLEOTIDE SEQUENCE [MRNA]</scope>
    <source>
        <strain>cv. Columbia</strain>
        <tissue>Flower</tissue>
    </source>
</reference>
<reference key="2">
    <citation type="journal article" date="1998" name="DNA Res.">
        <title>Structural analysis of Arabidopsis thaliana chromosome 5. V. Sequence features of the regions of 1,381,565 bp covered by twenty one physically assigned P1 and TAC clones.</title>
        <authorList>
            <person name="Kaneko T."/>
            <person name="Kotani H."/>
            <person name="Nakamura Y."/>
            <person name="Sato S."/>
            <person name="Asamizu E."/>
            <person name="Miyajima N."/>
            <person name="Tabata S."/>
        </authorList>
    </citation>
    <scope>NUCLEOTIDE SEQUENCE [LARGE SCALE GENOMIC DNA]</scope>
    <source>
        <strain>cv. Columbia</strain>
    </source>
</reference>
<reference key="3">
    <citation type="journal article" date="2017" name="Plant J.">
        <title>Araport11: a complete reannotation of the Arabidopsis thaliana reference genome.</title>
        <authorList>
            <person name="Cheng C.Y."/>
            <person name="Krishnakumar V."/>
            <person name="Chan A.P."/>
            <person name="Thibaud-Nissen F."/>
            <person name="Schobel S."/>
            <person name="Town C.D."/>
        </authorList>
    </citation>
    <scope>GENOME REANNOTATION</scope>
    <source>
        <strain>cv. Columbia</strain>
    </source>
</reference>
<reference key="4">
    <citation type="journal article" date="2002" name="Science">
        <title>Functional annotation of a full-length Arabidopsis cDNA collection.</title>
        <authorList>
            <person name="Seki M."/>
            <person name="Narusaka M."/>
            <person name="Kamiya A."/>
            <person name="Ishida J."/>
            <person name="Satou M."/>
            <person name="Sakurai T."/>
            <person name="Nakajima M."/>
            <person name="Enju A."/>
            <person name="Akiyama K."/>
            <person name="Oono Y."/>
            <person name="Muramatsu M."/>
            <person name="Hayashizaki Y."/>
            <person name="Kawai J."/>
            <person name="Carninci P."/>
            <person name="Itoh M."/>
            <person name="Ishii Y."/>
            <person name="Arakawa T."/>
            <person name="Shibata K."/>
            <person name="Shinagawa A."/>
            <person name="Shinozaki K."/>
        </authorList>
    </citation>
    <scope>NUCLEOTIDE SEQUENCE [LARGE SCALE MRNA]</scope>
    <source>
        <strain>cv. Columbia</strain>
    </source>
</reference>
<reference key="5">
    <citation type="journal article" date="2003" name="Science">
        <title>Empirical analysis of transcriptional activity in the Arabidopsis genome.</title>
        <authorList>
            <person name="Yamada K."/>
            <person name="Lim J."/>
            <person name="Dale J.M."/>
            <person name="Chen H."/>
            <person name="Shinn P."/>
            <person name="Palm C.J."/>
            <person name="Southwick A.M."/>
            <person name="Wu H.C."/>
            <person name="Kim C.J."/>
            <person name="Nguyen M."/>
            <person name="Pham P.K."/>
            <person name="Cheuk R.F."/>
            <person name="Karlin-Newmann G."/>
            <person name="Liu S.X."/>
            <person name="Lam B."/>
            <person name="Sakano H."/>
            <person name="Wu T."/>
            <person name="Yu G."/>
            <person name="Miranda M."/>
            <person name="Quach H.L."/>
            <person name="Tripp M."/>
            <person name="Chang C.H."/>
            <person name="Lee J.M."/>
            <person name="Toriumi M.J."/>
            <person name="Chan M.M."/>
            <person name="Tang C.C."/>
            <person name="Onodera C.S."/>
            <person name="Deng J.M."/>
            <person name="Akiyama K."/>
            <person name="Ansari Y."/>
            <person name="Arakawa T."/>
            <person name="Banh J."/>
            <person name="Banno F."/>
            <person name="Bowser L."/>
            <person name="Brooks S.Y."/>
            <person name="Carninci P."/>
            <person name="Chao Q."/>
            <person name="Choy N."/>
            <person name="Enju A."/>
            <person name="Goldsmith A.D."/>
            <person name="Gurjal M."/>
            <person name="Hansen N.F."/>
            <person name="Hayashizaki Y."/>
            <person name="Johnson-Hopson C."/>
            <person name="Hsuan V.W."/>
            <person name="Iida K."/>
            <person name="Karnes M."/>
            <person name="Khan S."/>
            <person name="Koesema E."/>
            <person name="Ishida J."/>
            <person name="Jiang P.X."/>
            <person name="Jones T."/>
            <person name="Kawai J."/>
            <person name="Kamiya A."/>
            <person name="Meyers C."/>
            <person name="Nakajima M."/>
            <person name="Narusaka M."/>
            <person name="Seki M."/>
            <person name="Sakurai T."/>
            <person name="Satou M."/>
            <person name="Tamse R."/>
            <person name="Vaysberg M."/>
            <person name="Wallender E.K."/>
            <person name="Wong C."/>
            <person name="Yamamura Y."/>
            <person name="Yuan S."/>
            <person name="Shinozaki K."/>
            <person name="Davis R.W."/>
            <person name="Theologis A."/>
            <person name="Ecker J.R."/>
        </authorList>
    </citation>
    <scope>NUCLEOTIDE SEQUENCE [LARGE SCALE MRNA]</scope>
    <source>
        <strain>cv. Columbia</strain>
    </source>
</reference>
<reference key="6">
    <citation type="submission" date="2002-03" db="EMBL/GenBank/DDBJ databases">
        <title>Full-length cDNA from Arabidopsis thaliana.</title>
        <authorList>
            <person name="Brover V.V."/>
            <person name="Troukhan M.E."/>
            <person name="Alexandrov N.A."/>
            <person name="Lu Y.-P."/>
            <person name="Flavell R.B."/>
            <person name="Feldmann K.A."/>
        </authorList>
    </citation>
    <scope>NUCLEOTIDE SEQUENCE [LARGE SCALE MRNA]</scope>
</reference>
<reference key="7">
    <citation type="journal article" date="2012" name="J. Exp. Bot.">
        <title>WRKY54 and WRKY70 co-operate as negative regulators of leaf senescence in Arabidopsis thaliana.</title>
        <authorList>
            <person name="Besseau S."/>
            <person name="Li J."/>
            <person name="Palva E.T."/>
        </authorList>
    </citation>
    <scope>FUNCTION</scope>
    <scope>INTERACTION WITH WRKY53; WRKY54 AND WRKY70</scope>
    <scope>DEVELOPMENTAL STAGE</scope>
    <scope>INDUCTION BY SALICYLIC ACID</scope>
    <source>
        <strain>cv. Columbia</strain>
    </source>
</reference>
<accession>Q9FL62</accession>
<evidence type="ECO:0000250" key="1">
    <source>
        <dbReference type="UniProtKB" id="Q9SUP6"/>
    </source>
</evidence>
<evidence type="ECO:0000255" key="2">
    <source>
        <dbReference type="PROSITE-ProRule" id="PRU00223"/>
    </source>
</evidence>
<evidence type="ECO:0000256" key="3">
    <source>
        <dbReference type="SAM" id="MobiDB-lite"/>
    </source>
</evidence>
<evidence type="ECO:0000269" key="4">
    <source>
    </source>
</evidence>
<evidence type="ECO:0000303" key="5">
    <source>
    </source>
</evidence>
<evidence type="ECO:0000305" key="6"/>
<evidence type="ECO:0000312" key="7">
    <source>
        <dbReference type="Araport" id="AT5G24110"/>
    </source>
</evidence>
<evidence type="ECO:0000312" key="8">
    <source>
        <dbReference type="EMBL" id="BAB11571.1"/>
    </source>
</evidence>
<protein>
    <recommendedName>
        <fullName evidence="5">Probable WRKY transcription factor 30</fullName>
    </recommendedName>
    <alternativeName>
        <fullName evidence="5">WRKY DNA-binding protein 30</fullName>
    </alternativeName>
</protein>
<dbReference type="EMBL" id="AF404858">
    <property type="protein sequence ID" value="AAK96196.1"/>
    <property type="molecule type" value="mRNA"/>
</dbReference>
<dbReference type="EMBL" id="AB010696">
    <property type="protein sequence ID" value="BAB11571.1"/>
    <property type="molecule type" value="Genomic_DNA"/>
</dbReference>
<dbReference type="EMBL" id="CP002688">
    <property type="protein sequence ID" value="AED93258.1"/>
    <property type="molecule type" value="Genomic_DNA"/>
</dbReference>
<dbReference type="EMBL" id="AK117885">
    <property type="protein sequence ID" value="BAC42524.1"/>
    <property type="molecule type" value="mRNA"/>
</dbReference>
<dbReference type="EMBL" id="BT005295">
    <property type="protein sequence ID" value="AAO63359.1"/>
    <property type="molecule type" value="mRNA"/>
</dbReference>
<dbReference type="EMBL" id="AY088401">
    <property type="protein sequence ID" value="AAM65939.1"/>
    <property type="molecule type" value="mRNA"/>
</dbReference>
<dbReference type="RefSeq" id="NP_568439.1">
    <property type="nucleotide sequence ID" value="NM_122316.3"/>
</dbReference>
<dbReference type="SMR" id="Q9FL62"/>
<dbReference type="BioGRID" id="17751">
    <property type="interactions" value="4"/>
</dbReference>
<dbReference type="STRING" id="3702.Q9FL62"/>
<dbReference type="PaxDb" id="3702-AT5G24110.1"/>
<dbReference type="ProteomicsDB" id="234270"/>
<dbReference type="EnsemblPlants" id="AT5G24110.1">
    <property type="protein sequence ID" value="AT5G24110.1"/>
    <property type="gene ID" value="AT5G24110"/>
</dbReference>
<dbReference type="GeneID" id="832476"/>
<dbReference type="Gramene" id="AT5G24110.1">
    <property type="protein sequence ID" value="AT5G24110.1"/>
    <property type="gene ID" value="AT5G24110"/>
</dbReference>
<dbReference type="KEGG" id="ath:AT5G24110"/>
<dbReference type="Araport" id="AT5G24110"/>
<dbReference type="TAIR" id="AT5G24110">
    <property type="gene designation" value="WRKY30"/>
</dbReference>
<dbReference type="eggNOG" id="ENOG502QPRM">
    <property type="taxonomic scope" value="Eukaryota"/>
</dbReference>
<dbReference type="HOGENOM" id="CLU_058534_0_0_1"/>
<dbReference type="InParanoid" id="Q9FL62"/>
<dbReference type="OMA" id="RDYAHQF"/>
<dbReference type="OrthoDB" id="1888929at2759"/>
<dbReference type="PhylomeDB" id="Q9FL62"/>
<dbReference type="PRO" id="PR:Q9FL62"/>
<dbReference type="Proteomes" id="UP000006548">
    <property type="component" value="Chromosome 5"/>
</dbReference>
<dbReference type="ExpressionAtlas" id="Q9FL62">
    <property type="expression patterns" value="baseline and differential"/>
</dbReference>
<dbReference type="GO" id="GO:0005737">
    <property type="term" value="C:cytoplasm"/>
    <property type="evidence" value="ECO:0000314"/>
    <property type="project" value="TAIR"/>
</dbReference>
<dbReference type="GO" id="GO:0005634">
    <property type="term" value="C:nucleus"/>
    <property type="evidence" value="ECO:0000314"/>
    <property type="project" value="TAIR"/>
</dbReference>
<dbReference type="GO" id="GO:0003700">
    <property type="term" value="F:DNA-binding transcription factor activity"/>
    <property type="evidence" value="ECO:0000250"/>
    <property type="project" value="TAIR"/>
</dbReference>
<dbReference type="GO" id="GO:0043565">
    <property type="term" value="F:sequence-specific DNA binding"/>
    <property type="evidence" value="ECO:0007669"/>
    <property type="project" value="InterPro"/>
</dbReference>
<dbReference type="GO" id="GO:0010150">
    <property type="term" value="P:leaf senescence"/>
    <property type="evidence" value="ECO:0000270"/>
    <property type="project" value="UniProtKB"/>
</dbReference>
<dbReference type="GO" id="GO:0042542">
    <property type="term" value="P:response to hydrogen peroxide"/>
    <property type="evidence" value="ECO:0000270"/>
    <property type="project" value="TAIR"/>
</dbReference>
<dbReference type="GO" id="GO:0010193">
    <property type="term" value="P:response to ozone"/>
    <property type="evidence" value="ECO:0000270"/>
    <property type="project" value="TAIR"/>
</dbReference>
<dbReference type="GO" id="GO:0009751">
    <property type="term" value="P:response to salicylic acid"/>
    <property type="evidence" value="ECO:0000270"/>
    <property type="project" value="TAIR"/>
</dbReference>
<dbReference type="FunFam" id="2.20.25.80:FF:000009">
    <property type="entry name" value="WRKY transcription factor 53"/>
    <property type="match status" value="1"/>
</dbReference>
<dbReference type="Gene3D" id="2.20.25.80">
    <property type="entry name" value="WRKY domain"/>
    <property type="match status" value="1"/>
</dbReference>
<dbReference type="InterPro" id="IPR003657">
    <property type="entry name" value="WRKY_dom"/>
</dbReference>
<dbReference type="InterPro" id="IPR036576">
    <property type="entry name" value="WRKY_dom_sf"/>
</dbReference>
<dbReference type="InterPro" id="IPR044810">
    <property type="entry name" value="WRKY_plant"/>
</dbReference>
<dbReference type="PANTHER" id="PTHR32096:SF115">
    <property type="entry name" value="WRKY TRANSCRIPTION FACTOR 30-RELATED"/>
    <property type="match status" value="1"/>
</dbReference>
<dbReference type="PANTHER" id="PTHR32096">
    <property type="entry name" value="WRKY TRANSCRIPTION FACTOR 30-RELATED-RELATED"/>
    <property type="match status" value="1"/>
</dbReference>
<dbReference type="Pfam" id="PF03106">
    <property type="entry name" value="WRKY"/>
    <property type="match status" value="1"/>
</dbReference>
<dbReference type="SMART" id="SM00774">
    <property type="entry name" value="WRKY"/>
    <property type="match status" value="1"/>
</dbReference>
<dbReference type="SUPFAM" id="SSF118290">
    <property type="entry name" value="WRKY DNA-binding domain"/>
    <property type="match status" value="1"/>
</dbReference>
<dbReference type="PROSITE" id="PS50811">
    <property type="entry name" value="WRKY"/>
    <property type="match status" value="1"/>
</dbReference>
<gene>
    <name evidence="5" type="primary">WRKY30</name>
    <name evidence="7" type="ordered locus">At5g24110</name>
    <name evidence="8" type="ORF">MLE8.3</name>
    <name evidence="6" type="ORF">MZF18.18</name>
</gene>
<comment type="function">
    <text evidence="1">Transcription factor. Interacts specifically with the W box (5'-(T)TGAC[CT]-3'), a frequently occurring elicitor-responsive cis-acting element.</text>
</comment>
<comment type="subunit">
    <text evidence="4">Interacts with WRKY53, WRKY54 and WRKY70.</text>
</comment>
<comment type="subcellular location">
    <subcellularLocation>
        <location evidence="2">Nucleus</location>
    </subcellularLocation>
</comment>
<comment type="developmental stage">
    <text evidence="4">Accumulates during developmental leaf senescence.</text>
</comment>
<comment type="induction">
    <text evidence="4">By salicylic acid (SA).</text>
</comment>
<comment type="similarity">
    <text evidence="6">Belongs to the WRKY group III family.</text>
</comment>